<feature type="chain" id="PRO_1000146970" description="D-alanine--D-alanyl carrier protein ligase">
    <location>
        <begin position="1"/>
        <end position="504"/>
    </location>
</feature>
<feature type="binding site" evidence="1">
    <location>
        <begin position="152"/>
        <end position="153"/>
    </location>
    <ligand>
        <name>ATP</name>
        <dbReference type="ChEBI" id="CHEBI:30616"/>
    </ligand>
</feature>
<feature type="binding site" evidence="1">
    <location>
        <position position="197"/>
    </location>
    <ligand>
        <name>D-alanine</name>
        <dbReference type="ChEBI" id="CHEBI:57416"/>
    </ligand>
</feature>
<feature type="binding site" evidence="1">
    <location>
        <begin position="292"/>
        <end position="297"/>
    </location>
    <ligand>
        <name>ATP</name>
        <dbReference type="ChEBI" id="CHEBI:30616"/>
    </ligand>
</feature>
<feature type="binding site" evidence="1">
    <location>
        <position position="301"/>
    </location>
    <ligand>
        <name>D-alanine</name>
        <dbReference type="ChEBI" id="CHEBI:57416"/>
    </ligand>
</feature>
<feature type="binding site" evidence="1">
    <location>
        <position position="383"/>
    </location>
    <ligand>
        <name>ATP</name>
        <dbReference type="ChEBI" id="CHEBI:30616"/>
    </ligand>
</feature>
<feature type="binding site" evidence="1">
    <location>
        <begin position="394"/>
        <end position="397"/>
    </location>
    <ligand>
        <name>ATP</name>
        <dbReference type="ChEBI" id="CHEBI:30616"/>
    </ligand>
</feature>
<feature type="binding site" evidence="1">
    <location>
        <position position="492"/>
    </location>
    <ligand>
        <name>ATP</name>
        <dbReference type="ChEBI" id="CHEBI:30616"/>
    </ligand>
</feature>
<feature type="binding site" evidence="1">
    <location>
        <position position="492"/>
    </location>
    <ligand>
        <name>D-alanine</name>
        <dbReference type="ChEBI" id="CHEBI:57416"/>
    </ligand>
</feature>
<evidence type="ECO:0000255" key="1">
    <source>
        <dbReference type="HAMAP-Rule" id="MF_00593"/>
    </source>
</evidence>
<keyword id="KW-0067">ATP-binding</keyword>
<keyword id="KW-0963">Cytoplasm</keyword>
<keyword id="KW-0436">Ligase</keyword>
<keyword id="KW-0547">Nucleotide-binding</keyword>
<gene>
    <name evidence="1" type="primary">dltA</name>
    <name type="ordered locus">BCA_1426</name>
</gene>
<dbReference type="EC" id="6.2.1.54" evidence="1"/>
<dbReference type="EMBL" id="CP001407">
    <property type="protein sequence ID" value="ACO29056.1"/>
    <property type="molecule type" value="Genomic_DNA"/>
</dbReference>
<dbReference type="RefSeq" id="WP_000770518.1">
    <property type="nucleotide sequence ID" value="NZ_CP009318.1"/>
</dbReference>
<dbReference type="SMR" id="C1EM80"/>
<dbReference type="KEGG" id="bcx:BCA_1426"/>
<dbReference type="PATRIC" id="fig|572264.18.peg.1376"/>
<dbReference type="UniPathway" id="UPA00556"/>
<dbReference type="Proteomes" id="UP000002210">
    <property type="component" value="Chromosome"/>
</dbReference>
<dbReference type="GO" id="GO:0005737">
    <property type="term" value="C:cytoplasm"/>
    <property type="evidence" value="ECO:0007669"/>
    <property type="project" value="UniProtKB-SubCell"/>
</dbReference>
<dbReference type="GO" id="GO:0005524">
    <property type="term" value="F:ATP binding"/>
    <property type="evidence" value="ECO:0007669"/>
    <property type="project" value="UniProtKB-KW"/>
</dbReference>
<dbReference type="GO" id="GO:0047473">
    <property type="term" value="F:D-alanine [D-alanyl carrier protein] ligase activity"/>
    <property type="evidence" value="ECO:0007669"/>
    <property type="project" value="UniProtKB-UniRule"/>
</dbReference>
<dbReference type="GO" id="GO:0070395">
    <property type="term" value="P:lipoteichoic acid biosynthetic process"/>
    <property type="evidence" value="ECO:0007669"/>
    <property type="project" value="UniProtKB-UniRule"/>
</dbReference>
<dbReference type="CDD" id="cd05945">
    <property type="entry name" value="DltA"/>
    <property type="match status" value="1"/>
</dbReference>
<dbReference type="FunFam" id="3.30.300.30:FF:000012">
    <property type="entry name" value="D-alanine--D-alanyl carrier protein ligase"/>
    <property type="match status" value="1"/>
</dbReference>
<dbReference type="FunFam" id="3.40.50.12780:FF:000015">
    <property type="entry name" value="D-alanine--D-alanyl carrier protein ligase"/>
    <property type="match status" value="1"/>
</dbReference>
<dbReference type="Gene3D" id="3.30.300.30">
    <property type="match status" value="1"/>
</dbReference>
<dbReference type="Gene3D" id="3.40.50.12780">
    <property type="entry name" value="N-terminal domain of ligase-like"/>
    <property type="match status" value="1"/>
</dbReference>
<dbReference type="HAMAP" id="MF_00593">
    <property type="entry name" value="DltA"/>
    <property type="match status" value="1"/>
</dbReference>
<dbReference type="InterPro" id="IPR010071">
    <property type="entry name" value="AA_adenyl_dom"/>
</dbReference>
<dbReference type="InterPro" id="IPR025110">
    <property type="entry name" value="AMP-bd_C"/>
</dbReference>
<dbReference type="InterPro" id="IPR045851">
    <property type="entry name" value="AMP-bd_C_sf"/>
</dbReference>
<dbReference type="InterPro" id="IPR020845">
    <property type="entry name" value="AMP-binding_CS"/>
</dbReference>
<dbReference type="InterPro" id="IPR000873">
    <property type="entry name" value="AMP-dep_synth/lig_dom"/>
</dbReference>
<dbReference type="InterPro" id="IPR042099">
    <property type="entry name" value="ANL_N_sf"/>
</dbReference>
<dbReference type="InterPro" id="IPR010072">
    <property type="entry name" value="DltA"/>
</dbReference>
<dbReference type="InterPro" id="IPR044507">
    <property type="entry name" value="DltA-like"/>
</dbReference>
<dbReference type="NCBIfam" id="TIGR01733">
    <property type="entry name" value="AA-adenyl-dom"/>
    <property type="match status" value="1"/>
</dbReference>
<dbReference type="NCBIfam" id="TIGR01734">
    <property type="entry name" value="D-ala-DACP-lig"/>
    <property type="match status" value="1"/>
</dbReference>
<dbReference type="NCBIfam" id="NF003417">
    <property type="entry name" value="PRK04813.1"/>
    <property type="match status" value="1"/>
</dbReference>
<dbReference type="PANTHER" id="PTHR45398">
    <property type="match status" value="1"/>
</dbReference>
<dbReference type="PANTHER" id="PTHR45398:SF1">
    <property type="entry name" value="ENZYME, PUTATIVE (JCVI)-RELATED"/>
    <property type="match status" value="1"/>
</dbReference>
<dbReference type="Pfam" id="PF00501">
    <property type="entry name" value="AMP-binding"/>
    <property type="match status" value="1"/>
</dbReference>
<dbReference type="Pfam" id="PF13193">
    <property type="entry name" value="AMP-binding_C"/>
    <property type="match status" value="1"/>
</dbReference>
<dbReference type="SUPFAM" id="SSF56801">
    <property type="entry name" value="Acetyl-CoA synthetase-like"/>
    <property type="match status" value="1"/>
</dbReference>
<dbReference type="PROSITE" id="PS00455">
    <property type="entry name" value="AMP_BINDING"/>
    <property type="match status" value="1"/>
</dbReference>
<reference key="1">
    <citation type="submission" date="2009-02" db="EMBL/GenBank/DDBJ databases">
        <title>Genome sequence of Bacillus cereus 03BB102.</title>
        <authorList>
            <person name="Dodson R.J."/>
            <person name="Jackson P."/>
            <person name="Munk A.C."/>
            <person name="Brettin T."/>
            <person name="Bruce D."/>
            <person name="Detter C."/>
            <person name="Tapia R."/>
            <person name="Han C."/>
            <person name="Sutton G."/>
            <person name="Sims D."/>
        </authorList>
    </citation>
    <scope>NUCLEOTIDE SEQUENCE [LARGE SCALE GENOMIC DNA]</scope>
    <source>
        <strain>03BB102</strain>
    </source>
</reference>
<accession>C1EM80</accession>
<sequence length="504" mass="56506">MKLLEQIEKWAIETPDQTAFVWRDAKITYKQLKEDSDALAHWISSEYPDDRSPIMVYGHMQPEMIINFLGCVKAGHAYIPVDLSIPADRVQRIAENSGAKLLLSAAAVTVTDLPVRIVSEDNLKDIFFTHKGNTPNPEHAVKGDENFYIIYTSGSTGNPKGVQITYNCLVSFTQWAVEDFNLQTGQVFLNQAPFSFDLSVMDIYPSLVTGGTLWAIDKDMIARPKDLFASLEQSDIQVWTSTPSFAEMCLMEASFSESMLPNMKTFLFCGEVLPNEVARKLIERFPKATIMNTYGPTEATVAVTGIHVTEEVLDQYKSLPVGYCKSDCRLLIMKEDGTIAPDGEKGEIVIVGPSVSVGYLGSPELTEKAFTMIDGERAYKTGDAGYVENGLLFYNGRLDFQIKLHGYRMELEEIEHHLRACSYVEGAVIVPIKKGEKYDYLLAVVVPGEHSFEKEFKLTSAIKKELNERLPNYMIPRKFMYQSSIPMTPNGKVDRKKLLSEVTA</sequence>
<name>DLTA_BACC3</name>
<organism>
    <name type="scientific">Bacillus cereus (strain 03BB102)</name>
    <dbReference type="NCBI Taxonomy" id="572264"/>
    <lineage>
        <taxon>Bacteria</taxon>
        <taxon>Bacillati</taxon>
        <taxon>Bacillota</taxon>
        <taxon>Bacilli</taxon>
        <taxon>Bacillales</taxon>
        <taxon>Bacillaceae</taxon>
        <taxon>Bacillus</taxon>
        <taxon>Bacillus cereus group</taxon>
    </lineage>
</organism>
<proteinExistence type="inferred from homology"/>
<comment type="function">
    <text evidence="1">Catalyzes the first step in the D-alanylation of lipoteichoic acid (LTA), the activation of D-alanine and its transfer onto the D-alanyl carrier protein (Dcp) DltC. In an ATP-dependent two-step reaction, forms a high energy D-alanyl-AMP intermediate, followed by transfer of the D-alanyl residue as a thiol ester to the phosphopantheinyl prosthetic group of the Dcp. D-alanylation of LTA plays an important role in modulating the properties of the cell wall in Gram-positive bacteria, influencing the net charge of the cell wall.</text>
</comment>
<comment type="catalytic activity">
    <reaction evidence="1">
        <text>holo-[D-alanyl-carrier protein] + D-alanine + ATP = D-alanyl-[D-alanyl-carrier protein] + AMP + diphosphate</text>
        <dbReference type="Rhea" id="RHEA:55132"/>
        <dbReference type="Rhea" id="RHEA-COMP:14102"/>
        <dbReference type="Rhea" id="RHEA-COMP:14103"/>
        <dbReference type="ChEBI" id="CHEBI:30616"/>
        <dbReference type="ChEBI" id="CHEBI:33019"/>
        <dbReference type="ChEBI" id="CHEBI:57416"/>
        <dbReference type="ChEBI" id="CHEBI:64479"/>
        <dbReference type="ChEBI" id="CHEBI:138620"/>
        <dbReference type="ChEBI" id="CHEBI:456215"/>
        <dbReference type="EC" id="6.2.1.54"/>
    </reaction>
</comment>
<comment type="pathway">
    <text evidence="1">Cell wall biogenesis; lipoteichoic acid biosynthesis.</text>
</comment>
<comment type="subcellular location">
    <subcellularLocation>
        <location evidence="1">Cytoplasm</location>
    </subcellularLocation>
</comment>
<comment type="similarity">
    <text evidence="1">Belongs to the ATP-dependent AMP-binding enzyme family. DltA subfamily.</text>
</comment>
<protein>
    <recommendedName>
        <fullName evidence="1">D-alanine--D-alanyl carrier protein ligase</fullName>
        <shortName evidence="1">DCL</shortName>
        <ecNumber evidence="1">6.2.1.54</ecNumber>
    </recommendedName>
    <alternativeName>
        <fullName evidence="1">D-alanine--poly(phosphoribitol) ligase subunit 1</fullName>
    </alternativeName>
    <alternativeName>
        <fullName evidence="1">D-alanine-activating enzyme</fullName>
        <shortName evidence="1">DAE</shortName>
    </alternativeName>
</protein>